<reference key="1">
    <citation type="journal article" date="2002" name="Nucleic Acids Res.">
        <title>Genome sequence of Shigella flexneri 2a: insights into pathogenicity through comparison with genomes of Escherichia coli K12 and O157.</title>
        <authorList>
            <person name="Jin Q."/>
            <person name="Yuan Z."/>
            <person name="Xu J."/>
            <person name="Wang Y."/>
            <person name="Shen Y."/>
            <person name="Lu W."/>
            <person name="Wang J."/>
            <person name="Liu H."/>
            <person name="Yang J."/>
            <person name="Yang F."/>
            <person name="Zhang X."/>
            <person name="Zhang J."/>
            <person name="Yang G."/>
            <person name="Wu H."/>
            <person name="Qu D."/>
            <person name="Dong J."/>
            <person name="Sun L."/>
            <person name="Xue Y."/>
            <person name="Zhao A."/>
            <person name="Gao Y."/>
            <person name="Zhu J."/>
            <person name="Kan B."/>
            <person name="Ding K."/>
            <person name="Chen S."/>
            <person name="Cheng H."/>
            <person name="Yao Z."/>
            <person name="He B."/>
            <person name="Chen R."/>
            <person name="Ma D."/>
            <person name="Qiang B."/>
            <person name="Wen Y."/>
            <person name="Hou Y."/>
            <person name="Yu J."/>
        </authorList>
    </citation>
    <scope>NUCLEOTIDE SEQUENCE [LARGE SCALE GENOMIC DNA]</scope>
    <source>
        <strain>301 / Serotype 2a</strain>
    </source>
</reference>
<reference key="2">
    <citation type="journal article" date="2003" name="Infect. Immun.">
        <title>Complete genome sequence and comparative genomics of Shigella flexneri serotype 2a strain 2457T.</title>
        <authorList>
            <person name="Wei J."/>
            <person name="Goldberg M.B."/>
            <person name="Burland V."/>
            <person name="Venkatesan M.M."/>
            <person name="Deng W."/>
            <person name="Fournier G."/>
            <person name="Mayhew G.F."/>
            <person name="Plunkett G. III"/>
            <person name="Rose D.J."/>
            <person name="Darling A."/>
            <person name="Mau B."/>
            <person name="Perna N.T."/>
            <person name="Payne S.M."/>
            <person name="Runyen-Janecky L.J."/>
            <person name="Zhou S."/>
            <person name="Schwartz D.C."/>
            <person name="Blattner F.R."/>
        </authorList>
    </citation>
    <scope>NUCLEOTIDE SEQUENCE [LARGE SCALE GENOMIC DNA]</scope>
    <source>
        <strain>ATCC 700930 / 2457T / Serotype 2a</strain>
    </source>
</reference>
<gene>
    <name evidence="1" type="primary">pepA</name>
    <name type="ordered locus">SF4229</name>
    <name type="ordered locus">S4490</name>
</gene>
<sequence>MEFSVKSGSPEKQRSACIVVGVFEPRRLSPIAEQLDKISDGYISALLRRGELEGKPGQTLLLHHVPNVLSERILLIGCGKERELDERQYKQVIQKTINTLNDTGSMEAVCFLTELHVKGRNNYWKVRQAVETAKETLYSFDQLKTNKSEPRRPLRKMVFNVPTRRELTSGERAIQHGQAIAAGIKAAKDLGNMPPNICNAAYLASQARQLADSYSKNVITRVIGEQQMKELGMHSYLAVGQGSQNESLMSVIEYKGNASEDARPIVLVGKGLTFDSGGISIKPSEGMDEMKYDMCGAAAVYGVMRMVAELQLPINVIGVLAGCENMPGGRAYRPGDVLTTMSGQTVEVLNTDAEGRLVLCDVLTYVERFEPEAVIDVATLTGACVIALGHHITGLMTNHNPLAHELIAASEQSGDRAWRLPLGDEYQEQLESNFADMANIGGRPGGAITAGCFLSRFTRKYNWAHLDIAGTAWRSGKAKGATGRPVALLAQFLLNRAGFNGEE</sequence>
<keyword id="KW-0031">Aminopeptidase</keyword>
<keyword id="KW-0963">Cytoplasm</keyword>
<keyword id="KW-0378">Hydrolase</keyword>
<keyword id="KW-0464">Manganese</keyword>
<keyword id="KW-0479">Metal-binding</keyword>
<keyword id="KW-0645">Protease</keyword>
<keyword id="KW-1185">Reference proteome</keyword>
<comment type="function">
    <text evidence="1">Presumably involved in the processing and regular turnover of intracellular proteins. Catalyzes the removal of unsubstituted N-terminal amino acids from various peptides.</text>
</comment>
<comment type="catalytic activity">
    <reaction evidence="1">
        <text>Release of an N-terminal amino acid, Xaa-|-Yaa-, in which Xaa is preferably Leu, but may be other amino acids including Pro although not Arg or Lys, and Yaa may be Pro. Amino acid amides and methyl esters are also readily hydrolyzed, but rates on arylamides are exceedingly low.</text>
        <dbReference type="EC" id="3.4.11.1"/>
    </reaction>
</comment>
<comment type="catalytic activity">
    <reaction evidence="1">
        <text>Release of an N-terminal amino acid, preferentially leucine, but not glutamic or aspartic acids.</text>
        <dbReference type="EC" id="3.4.11.10"/>
    </reaction>
</comment>
<comment type="cofactor">
    <cofactor evidence="1">
        <name>Mn(2+)</name>
        <dbReference type="ChEBI" id="CHEBI:29035"/>
    </cofactor>
    <text evidence="1">Binds 2 manganese ions per subunit.</text>
</comment>
<comment type="subcellular location">
    <subcellularLocation>
        <location evidence="1">Cytoplasm</location>
    </subcellularLocation>
</comment>
<comment type="similarity">
    <text evidence="1">Belongs to the peptidase M17 family.</text>
</comment>
<feature type="chain" id="PRO_0000165798" description="Probable cytosol aminopeptidase">
    <location>
        <begin position="1"/>
        <end position="503"/>
    </location>
</feature>
<feature type="active site" evidence="1">
    <location>
        <position position="282"/>
    </location>
</feature>
<feature type="active site" evidence="1">
    <location>
        <position position="356"/>
    </location>
</feature>
<feature type="binding site" evidence="1">
    <location>
        <position position="270"/>
    </location>
    <ligand>
        <name>Mn(2+)</name>
        <dbReference type="ChEBI" id="CHEBI:29035"/>
        <label>2</label>
    </ligand>
</feature>
<feature type="binding site" evidence="1">
    <location>
        <position position="275"/>
    </location>
    <ligand>
        <name>Mn(2+)</name>
        <dbReference type="ChEBI" id="CHEBI:29035"/>
        <label>1</label>
    </ligand>
</feature>
<feature type="binding site" evidence="1">
    <location>
        <position position="275"/>
    </location>
    <ligand>
        <name>Mn(2+)</name>
        <dbReference type="ChEBI" id="CHEBI:29035"/>
        <label>2</label>
    </ligand>
</feature>
<feature type="binding site" evidence="1">
    <location>
        <position position="293"/>
    </location>
    <ligand>
        <name>Mn(2+)</name>
        <dbReference type="ChEBI" id="CHEBI:29035"/>
        <label>2</label>
    </ligand>
</feature>
<feature type="binding site" evidence="1">
    <location>
        <position position="352"/>
    </location>
    <ligand>
        <name>Mn(2+)</name>
        <dbReference type="ChEBI" id="CHEBI:29035"/>
        <label>1</label>
    </ligand>
</feature>
<feature type="binding site" evidence="1">
    <location>
        <position position="354"/>
    </location>
    <ligand>
        <name>Mn(2+)</name>
        <dbReference type="ChEBI" id="CHEBI:29035"/>
        <label>1</label>
    </ligand>
</feature>
<feature type="binding site" evidence="1">
    <location>
        <position position="354"/>
    </location>
    <ligand>
        <name>Mn(2+)</name>
        <dbReference type="ChEBI" id="CHEBI:29035"/>
        <label>2</label>
    </ligand>
</feature>
<name>AMPA_SHIFL</name>
<accession>Q83P64</accession>
<accession>Q7BYM5</accession>
<organism>
    <name type="scientific">Shigella flexneri</name>
    <dbReference type="NCBI Taxonomy" id="623"/>
    <lineage>
        <taxon>Bacteria</taxon>
        <taxon>Pseudomonadati</taxon>
        <taxon>Pseudomonadota</taxon>
        <taxon>Gammaproteobacteria</taxon>
        <taxon>Enterobacterales</taxon>
        <taxon>Enterobacteriaceae</taxon>
        <taxon>Shigella</taxon>
    </lineage>
</organism>
<protein>
    <recommendedName>
        <fullName evidence="1">Probable cytosol aminopeptidase</fullName>
        <ecNumber evidence="1">3.4.11.1</ecNumber>
    </recommendedName>
    <alternativeName>
        <fullName evidence="1">Leucine aminopeptidase</fullName>
        <shortName evidence="1">LAP</shortName>
        <ecNumber evidence="1">3.4.11.10</ecNumber>
    </alternativeName>
    <alternativeName>
        <fullName evidence="1">Leucyl aminopeptidase</fullName>
    </alternativeName>
</protein>
<dbReference type="EC" id="3.4.11.1" evidence="1"/>
<dbReference type="EC" id="3.4.11.10" evidence="1"/>
<dbReference type="EMBL" id="AE005674">
    <property type="protein sequence ID" value="AAN45648.1"/>
    <property type="molecule type" value="Genomic_DNA"/>
</dbReference>
<dbReference type="EMBL" id="AE014073">
    <property type="protein sequence ID" value="AAP19436.1"/>
    <property type="molecule type" value="Genomic_DNA"/>
</dbReference>
<dbReference type="RefSeq" id="NP_709941.1">
    <property type="nucleotide sequence ID" value="NC_004337.2"/>
</dbReference>
<dbReference type="RefSeq" id="WP_000397161.1">
    <property type="nucleotide sequence ID" value="NZ_WPGW01000110.1"/>
</dbReference>
<dbReference type="SMR" id="Q83P64"/>
<dbReference type="STRING" id="198214.SF4229"/>
<dbReference type="MEROPS" id="M17.003"/>
<dbReference type="PaxDb" id="198214-SF4229"/>
<dbReference type="GeneID" id="1025421"/>
<dbReference type="KEGG" id="sfl:SF4229"/>
<dbReference type="KEGG" id="sfx:S4490"/>
<dbReference type="PATRIC" id="fig|198214.7.peg.4989"/>
<dbReference type="HOGENOM" id="CLU_013734_2_2_6"/>
<dbReference type="Proteomes" id="UP000001006">
    <property type="component" value="Chromosome"/>
</dbReference>
<dbReference type="Proteomes" id="UP000002673">
    <property type="component" value="Chromosome"/>
</dbReference>
<dbReference type="GO" id="GO:0005737">
    <property type="term" value="C:cytoplasm"/>
    <property type="evidence" value="ECO:0007669"/>
    <property type="project" value="UniProtKB-SubCell"/>
</dbReference>
<dbReference type="GO" id="GO:0030145">
    <property type="term" value="F:manganese ion binding"/>
    <property type="evidence" value="ECO:0007669"/>
    <property type="project" value="UniProtKB-UniRule"/>
</dbReference>
<dbReference type="GO" id="GO:0070006">
    <property type="term" value="F:metalloaminopeptidase activity"/>
    <property type="evidence" value="ECO:0007669"/>
    <property type="project" value="InterPro"/>
</dbReference>
<dbReference type="GO" id="GO:0006508">
    <property type="term" value="P:proteolysis"/>
    <property type="evidence" value="ECO:0007669"/>
    <property type="project" value="UniProtKB-KW"/>
</dbReference>
<dbReference type="CDD" id="cd00433">
    <property type="entry name" value="Peptidase_M17"/>
    <property type="match status" value="1"/>
</dbReference>
<dbReference type="FunFam" id="3.40.220.10:FF:000001">
    <property type="entry name" value="Probable cytosol aminopeptidase"/>
    <property type="match status" value="1"/>
</dbReference>
<dbReference type="FunFam" id="3.40.630.10:FF:000004">
    <property type="entry name" value="Probable cytosol aminopeptidase"/>
    <property type="match status" value="1"/>
</dbReference>
<dbReference type="Gene3D" id="3.40.220.10">
    <property type="entry name" value="Leucine Aminopeptidase, subunit E, domain 1"/>
    <property type="match status" value="1"/>
</dbReference>
<dbReference type="Gene3D" id="3.40.630.10">
    <property type="entry name" value="Zn peptidases"/>
    <property type="match status" value="1"/>
</dbReference>
<dbReference type="HAMAP" id="MF_00181">
    <property type="entry name" value="Cytosol_peptidase_M17"/>
    <property type="match status" value="1"/>
</dbReference>
<dbReference type="InterPro" id="IPR011356">
    <property type="entry name" value="Leucine_aapep/pepB"/>
</dbReference>
<dbReference type="InterPro" id="IPR043472">
    <property type="entry name" value="Macro_dom-like"/>
</dbReference>
<dbReference type="InterPro" id="IPR000819">
    <property type="entry name" value="Peptidase_M17_C"/>
</dbReference>
<dbReference type="InterPro" id="IPR023042">
    <property type="entry name" value="Peptidase_M17_leu_NH2_pept"/>
</dbReference>
<dbReference type="InterPro" id="IPR008283">
    <property type="entry name" value="Peptidase_M17_N"/>
</dbReference>
<dbReference type="NCBIfam" id="NF002072">
    <property type="entry name" value="PRK00913.1-1"/>
    <property type="match status" value="1"/>
</dbReference>
<dbReference type="NCBIfam" id="NF002073">
    <property type="entry name" value="PRK00913.1-2"/>
    <property type="match status" value="1"/>
</dbReference>
<dbReference type="NCBIfam" id="NF002074">
    <property type="entry name" value="PRK00913.1-4"/>
    <property type="match status" value="1"/>
</dbReference>
<dbReference type="PANTHER" id="PTHR11963:SF23">
    <property type="entry name" value="CYTOSOL AMINOPEPTIDASE"/>
    <property type="match status" value="1"/>
</dbReference>
<dbReference type="PANTHER" id="PTHR11963">
    <property type="entry name" value="LEUCINE AMINOPEPTIDASE-RELATED"/>
    <property type="match status" value="1"/>
</dbReference>
<dbReference type="Pfam" id="PF00883">
    <property type="entry name" value="Peptidase_M17"/>
    <property type="match status" value="1"/>
</dbReference>
<dbReference type="Pfam" id="PF02789">
    <property type="entry name" value="Peptidase_M17_N"/>
    <property type="match status" value="1"/>
</dbReference>
<dbReference type="PRINTS" id="PR00481">
    <property type="entry name" value="LAMNOPPTDASE"/>
</dbReference>
<dbReference type="SUPFAM" id="SSF52949">
    <property type="entry name" value="Macro domain-like"/>
    <property type="match status" value="1"/>
</dbReference>
<dbReference type="SUPFAM" id="SSF53187">
    <property type="entry name" value="Zn-dependent exopeptidases"/>
    <property type="match status" value="1"/>
</dbReference>
<dbReference type="PROSITE" id="PS00631">
    <property type="entry name" value="CYTOSOL_AP"/>
    <property type="match status" value="1"/>
</dbReference>
<evidence type="ECO:0000255" key="1">
    <source>
        <dbReference type="HAMAP-Rule" id="MF_00181"/>
    </source>
</evidence>
<proteinExistence type="inferred from homology"/>